<gene>
    <name type="ordered locus">MA_3235</name>
</gene>
<keyword id="KW-1185">Reference proteome</keyword>
<proteinExistence type="inferred from homology"/>
<feature type="chain" id="PRO_0000219909" description="UPF0237 protein MA_3235">
    <location>
        <begin position="1"/>
        <end position="92"/>
    </location>
</feature>
<feature type="domain" description="ACT" evidence="1">
    <location>
        <begin position="7"/>
        <end position="81"/>
    </location>
</feature>
<protein>
    <recommendedName>
        <fullName evidence="1">UPF0237 protein MA_3235</fullName>
    </recommendedName>
</protein>
<comment type="similarity">
    <text evidence="1">Belongs to the UPF0237 family.</text>
</comment>
<reference key="1">
    <citation type="journal article" date="2002" name="Genome Res.">
        <title>The genome of Methanosarcina acetivorans reveals extensive metabolic and physiological diversity.</title>
        <authorList>
            <person name="Galagan J.E."/>
            <person name="Nusbaum C."/>
            <person name="Roy A."/>
            <person name="Endrizzi M.G."/>
            <person name="Macdonald P."/>
            <person name="FitzHugh W."/>
            <person name="Calvo S."/>
            <person name="Engels R."/>
            <person name="Smirnov S."/>
            <person name="Atnoor D."/>
            <person name="Brown A."/>
            <person name="Allen N."/>
            <person name="Naylor J."/>
            <person name="Stange-Thomann N."/>
            <person name="DeArellano K."/>
            <person name="Johnson R."/>
            <person name="Linton L."/>
            <person name="McEwan P."/>
            <person name="McKernan K."/>
            <person name="Talamas J."/>
            <person name="Tirrell A."/>
            <person name="Ye W."/>
            <person name="Zimmer A."/>
            <person name="Barber R.D."/>
            <person name="Cann I."/>
            <person name="Graham D.E."/>
            <person name="Grahame D.A."/>
            <person name="Guss A.M."/>
            <person name="Hedderich R."/>
            <person name="Ingram-Smith C."/>
            <person name="Kuettner H.C."/>
            <person name="Krzycki J.A."/>
            <person name="Leigh J.A."/>
            <person name="Li W."/>
            <person name="Liu J."/>
            <person name="Mukhopadhyay B."/>
            <person name="Reeve J.N."/>
            <person name="Smith K."/>
            <person name="Springer T.A."/>
            <person name="Umayam L.A."/>
            <person name="White O."/>
            <person name="White R.H."/>
            <person name="de Macario E.C."/>
            <person name="Ferry J.G."/>
            <person name="Jarrell K.F."/>
            <person name="Jing H."/>
            <person name="Macario A.J.L."/>
            <person name="Paulsen I.T."/>
            <person name="Pritchett M."/>
            <person name="Sowers K.R."/>
            <person name="Swanson R.V."/>
            <person name="Zinder S.H."/>
            <person name="Lander E."/>
            <person name="Metcalf W.W."/>
            <person name="Birren B."/>
        </authorList>
    </citation>
    <scope>NUCLEOTIDE SEQUENCE [LARGE SCALE GENOMIC DNA]</scope>
    <source>
        <strain>ATCC 35395 / DSM 2834 / JCM 12185 / C2A</strain>
    </source>
</reference>
<sequence>MTSSRFIITVIGSDRVGIVARITTVMASYNVNIVDISQTIMQGIFTMIMLAEAPKENFDLAAFQHAMDAEGKSLGVEVKVQHEDVFRFMHRI</sequence>
<evidence type="ECO:0000255" key="1">
    <source>
        <dbReference type="HAMAP-Rule" id="MF_01054"/>
    </source>
</evidence>
<accession>Q8TL08</accession>
<organism>
    <name type="scientific">Methanosarcina acetivorans (strain ATCC 35395 / DSM 2834 / JCM 12185 / C2A)</name>
    <dbReference type="NCBI Taxonomy" id="188937"/>
    <lineage>
        <taxon>Archaea</taxon>
        <taxon>Methanobacteriati</taxon>
        <taxon>Methanobacteriota</taxon>
        <taxon>Stenosarchaea group</taxon>
        <taxon>Methanomicrobia</taxon>
        <taxon>Methanosarcinales</taxon>
        <taxon>Methanosarcinaceae</taxon>
        <taxon>Methanosarcina</taxon>
    </lineage>
</organism>
<dbReference type="EMBL" id="AE010299">
    <property type="protein sequence ID" value="AAM06606.1"/>
    <property type="molecule type" value="Genomic_DNA"/>
</dbReference>
<dbReference type="RefSeq" id="WP_011023169.1">
    <property type="nucleotide sequence ID" value="NC_003552.1"/>
</dbReference>
<dbReference type="SMR" id="Q8TL08"/>
<dbReference type="STRING" id="188937.MA_3235"/>
<dbReference type="EnsemblBacteria" id="AAM06606">
    <property type="protein sequence ID" value="AAM06606"/>
    <property type="gene ID" value="MA_3235"/>
</dbReference>
<dbReference type="GeneID" id="1475128"/>
<dbReference type="KEGG" id="mac:MA_3235"/>
<dbReference type="HOGENOM" id="CLU_155669_0_1_2"/>
<dbReference type="InParanoid" id="Q8TL08"/>
<dbReference type="OrthoDB" id="27277at2157"/>
<dbReference type="PhylomeDB" id="Q8TL08"/>
<dbReference type="Proteomes" id="UP000002487">
    <property type="component" value="Chromosome"/>
</dbReference>
<dbReference type="GO" id="GO:0005829">
    <property type="term" value="C:cytosol"/>
    <property type="evidence" value="ECO:0000318"/>
    <property type="project" value="GO_Central"/>
</dbReference>
<dbReference type="GO" id="GO:0006351">
    <property type="term" value="P:DNA-templated transcription"/>
    <property type="evidence" value="ECO:0000318"/>
    <property type="project" value="GO_Central"/>
</dbReference>
<dbReference type="CDD" id="cd04872">
    <property type="entry name" value="ACT_1ZPV"/>
    <property type="match status" value="1"/>
</dbReference>
<dbReference type="FunFam" id="3.30.70.260:FF:000032">
    <property type="entry name" value="UPF0237 protein SP_0238"/>
    <property type="match status" value="1"/>
</dbReference>
<dbReference type="Gene3D" id="3.30.70.260">
    <property type="match status" value="1"/>
</dbReference>
<dbReference type="HAMAP" id="MF_01054">
    <property type="entry name" value="UPF0237"/>
    <property type="match status" value="1"/>
</dbReference>
<dbReference type="InterPro" id="IPR045865">
    <property type="entry name" value="ACT-like_dom_sf"/>
</dbReference>
<dbReference type="InterPro" id="IPR002912">
    <property type="entry name" value="ACT_dom"/>
</dbReference>
<dbReference type="InterPro" id="IPR050990">
    <property type="entry name" value="UPF0237/GcvR_regulator"/>
</dbReference>
<dbReference type="InterPro" id="IPR022986">
    <property type="entry name" value="UPF0237_ACT"/>
</dbReference>
<dbReference type="NCBIfam" id="NF001220">
    <property type="entry name" value="PRK00194.1"/>
    <property type="match status" value="1"/>
</dbReference>
<dbReference type="PANTHER" id="PTHR34875">
    <property type="entry name" value="UPF0237 PROTEIN MJ1558"/>
    <property type="match status" value="1"/>
</dbReference>
<dbReference type="PANTHER" id="PTHR34875:SF6">
    <property type="entry name" value="UPF0237 PROTEIN MJ1558"/>
    <property type="match status" value="1"/>
</dbReference>
<dbReference type="Pfam" id="PF13740">
    <property type="entry name" value="ACT_6"/>
    <property type="match status" value="1"/>
</dbReference>
<dbReference type="SUPFAM" id="SSF55021">
    <property type="entry name" value="ACT-like"/>
    <property type="match status" value="1"/>
</dbReference>
<dbReference type="PROSITE" id="PS51671">
    <property type="entry name" value="ACT"/>
    <property type="match status" value="1"/>
</dbReference>
<name>Y3235_METAC</name>